<organism>
    <name type="scientific">Staphylococcus aureus (strain Mu50 / ATCC 700699)</name>
    <dbReference type="NCBI Taxonomy" id="158878"/>
    <lineage>
        <taxon>Bacteria</taxon>
        <taxon>Bacillati</taxon>
        <taxon>Bacillota</taxon>
        <taxon>Bacilli</taxon>
        <taxon>Bacillales</taxon>
        <taxon>Staphylococcaceae</taxon>
        <taxon>Staphylococcus</taxon>
    </lineage>
</organism>
<evidence type="ECO:0000250" key="1"/>
<evidence type="ECO:0000255" key="2"/>
<evidence type="ECO:0000256" key="3">
    <source>
        <dbReference type="SAM" id="MobiDB-lite"/>
    </source>
</evidence>
<evidence type="ECO:0000305" key="4"/>
<sequence>MSSQKKKISLFAFFLLTVITITLKTYFSYYVDFSLGVKGLVQNLILLMNPYSLVALVLSVFLFFKGKKAFWFMFIGGFLLTFLLYANVVYFRFFSDFLTFSTLNQVGNVESMGGAVSASFKWYDFVYFIDTLVYLFILIFKTKWLDTKAFSKKFVPVVMAASVALFFLNLAFAETDRPELLTRTFDHKYLVKYLGPYNFTVYDGVKTIENNQQKALASEDDLTKVLNYTKQRQTEPNPEYYGVAKKKNIIKIHLESFQTFLINKKVNGKEVTPFLNKLSSGKEQFTYFPNFFHQTGQGKTSDSEFTMDNSLYGLPQGSAFSLKGDNTYQSLPAILDQKQGYKSDVMHGDYKTFWNRDQVYKHFGIDKFYDATYYDMSDKNVVNLGLKDKIFFKDSANYQAKMKSPFYSHLITLTNHYPFTLDEKDATIEKSNTGDATVDGYIQTARYLDEALEEYINDLKKKGLYDNSVIMIYGDHYGISENHNNAMEKLLGEKITPAKFTDLNRTGFWIKIPGKSGGINNEYAGQVDVMPTILHLAGIDTKNYLMFGTDLFSKGHNQVVPFRNGDFITKDYKYVNGKIYSNKNNELITTQPADFEKNKKQVEKDLEMSDNVLNGDLFRFYKNPDFKKVNPSKYKYETGPKANSKK</sequence>
<comment type="function">
    <text evidence="1">Catalyzes the polymerization of lipoteichoic acid (LTA) polyglycerol phosphate, a reaction that presumably uses phosphatidylglycerol (PG) as substrate. Is required for staphylococcal growth and cell division process (By similarity).</text>
</comment>
<comment type="pathway">
    <text>Cell wall biogenesis; lipoteichoic acid biosynthesis.</text>
</comment>
<comment type="subcellular location">
    <subcellularLocation>
        <location evidence="4">Cell membrane</location>
        <topology evidence="4">Multi-pass membrane protein</topology>
    </subcellularLocation>
</comment>
<comment type="subcellular location">
    <molecule>Processed glycerol phosphate lipoteichoic acid synthase</molecule>
    <subcellularLocation>
        <location evidence="1">Secreted</location>
    </subcellularLocation>
</comment>
<comment type="PTM">
    <text evidence="1">Proteolytically cleaved.</text>
</comment>
<comment type="similarity">
    <text evidence="4">Belongs to the LTA synthase family.</text>
</comment>
<feature type="chain" id="PRO_0000305358" description="Glycerol phosphate lipoteichoic acid synthase">
    <location>
        <begin position="1"/>
        <end position="217"/>
    </location>
</feature>
<feature type="chain" id="PRO_0000305359" description="Processed glycerol phosphate lipoteichoic acid synthase">
    <location>
        <begin position="218"/>
        <end position="646"/>
    </location>
</feature>
<feature type="topological domain" description="Cytoplasmic" evidence="2">
    <location>
        <begin position="1"/>
        <end position="7"/>
    </location>
</feature>
<feature type="transmembrane region" description="Helical" evidence="2">
    <location>
        <begin position="8"/>
        <end position="28"/>
    </location>
</feature>
<feature type="topological domain" description="Extracellular" evidence="2">
    <location>
        <begin position="29"/>
        <end position="43"/>
    </location>
</feature>
<feature type="transmembrane region" description="Helical" evidence="2">
    <location>
        <begin position="44"/>
        <end position="64"/>
    </location>
</feature>
<feature type="topological domain" description="Cytoplasmic" evidence="2">
    <location>
        <begin position="65"/>
        <end position="68"/>
    </location>
</feature>
<feature type="transmembrane region" description="Helical" evidence="2">
    <location>
        <begin position="69"/>
        <end position="89"/>
    </location>
</feature>
<feature type="topological domain" description="Extracellular" evidence="2">
    <location>
        <begin position="90"/>
        <end position="119"/>
    </location>
</feature>
<feature type="transmembrane region" description="Helical" evidence="2">
    <location>
        <begin position="120"/>
        <end position="140"/>
    </location>
</feature>
<feature type="topological domain" description="Cytoplasmic" evidence="2">
    <location>
        <begin position="141"/>
        <end position="153"/>
    </location>
</feature>
<feature type="transmembrane region" description="Helical" evidence="2">
    <location>
        <begin position="154"/>
        <end position="174"/>
    </location>
</feature>
<feature type="topological domain" description="Extracellular" evidence="2">
    <location>
        <begin position="175"/>
        <end position="646"/>
    </location>
</feature>
<feature type="region of interest" description="Disordered" evidence="3">
    <location>
        <begin position="623"/>
        <end position="646"/>
    </location>
</feature>
<feature type="compositionally biased region" description="Basic and acidic residues" evidence="3">
    <location>
        <begin position="623"/>
        <end position="638"/>
    </location>
</feature>
<feature type="active site" evidence="1">
    <location>
        <position position="300"/>
    </location>
</feature>
<feature type="binding site" evidence="1">
    <location>
        <position position="255"/>
    </location>
    <ligand>
        <name>Mn(2+)</name>
        <dbReference type="ChEBI" id="CHEBI:29035"/>
    </ligand>
</feature>
<feature type="binding site" evidence="1">
    <location>
        <position position="300"/>
    </location>
    <ligand>
        <name>Mn(2+)</name>
        <dbReference type="ChEBI" id="CHEBI:29035"/>
    </ligand>
</feature>
<feature type="binding site" evidence="1">
    <location>
        <position position="416"/>
    </location>
    <ligand>
        <name>substrate</name>
    </ligand>
</feature>
<feature type="binding site" evidence="1">
    <location>
        <position position="475"/>
    </location>
    <ligand>
        <name>Mn(2+)</name>
        <dbReference type="ChEBI" id="CHEBI:29035"/>
    </ligand>
</feature>
<feature type="binding site" evidence="1">
    <location>
        <position position="476"/>
    </location>
    <ligand>
        <name>Mn(2+)</name>
        <dbReference type="ChEBI" id="CHEBI:29035"/>
    </ligand>
</feature>
<feature type="site" description="Cleavage" evidence="1">
    <location>
        <begin position="217"/>
        <end position="218"/>
    </location>
</feature>
<protein>
    <recommendedName>
        <fullName>Lipoteichoic acid synthase</fullName>
    </recommendedName>
    <component>
        <recommendedName>
            <fullName>Glycerol phosphate lipoteichoic acid synthase</fullName>
            <shortName>LTA synthase</shortName>
            <ecNumber>2.7.8.-</ecNumber>
        </recommendedName>
        <alternativeName>
            <fullName>Polyglycerol phosphate synthase</fullName>
        </alternativeName>
    </component>
    <component>
        <recommendedName>
            <fullName>Processed glycerol phosphate lipoteichoic acid synthase</fullName>
        </recommendedName>
    </component>
</protein>
<keyword id="KW-1003">Cell membrane</keyword>
<keyword id="KW-0961">Cell wall biogenesis/degradation</keyword>
<keyword id="KW-0464">Manganese</keyword>
<keyword id="KW-0472">Membrane</keyword>
<keyword id="KW-0479">Metal-binding</keyword>
<keyword id="KW-0964">Secreted</keyword>
<keyword id="KW-0808">Transferase</keyword>
<keyword id="KW-0812">Transmembrane</keyword>
<keyword id="KW-1133">Transmembrane helix</keyword>
<gene>
    <name type="primary">ltaS</name>
    <name type="ordered locus">SAV0719</name>
</gene>
<dbReference type="EC" id="2.7.8.-"/>
<dbReference type="EMBL" id="BA000017">
    <property type="protein sequence ID" value="BAB56881.1"/>
    <property type="molecule type" value="Genomic_DNA"/>
</dbReference>
<dbReference type="RefSeq" id="WP_000098285.1">
    <property type="nucleotide sequence ID" value="NC_002758.2"/>
</dbReference>
<dbReference type="SMR" id="Q99VQ4"/>
<dbReference type="KEGG" id="sav:SAV0719"/>
<dbReference type="HOGENOM" id="CLU_021310_0_0_9"/>
<dbReference type="PhylomeDB" id="Q99VQ4"/>
<dbReference type="UniPathway" id="UPA00556"/>
<dbReference type="PRO" id="PR:Q99VQ4"/>
<dbReference type="Proteomes" id="UP000002481">
    <property type="component" value="Chromosome"/>
</dbReference>
<dbReference type="GO" id="GO:0005576">
    <property type="term" value="C:extracellular region"/>
    <property type="evidence" value="ECO:0007669"/>
    <property type="project" value="UniProtKB-SubCell"/>
</dbReference>
<dbReference type="GO" id="GO:0005886">
    <property type="term" value="C:plasma membrane"/>
    <property type="evidence" value="ECO:0007669"/>
    <property type="project" value="UniProtKB-SubCell"/>
</dbReference>
<dbReference type="GO" id="GO:0046872">
    <property type="term" value="F:metal ion binding"/>
    <property type="evidence" value="ECO:0007669"/>
    <property type="project" value="UniProtKB-KW"/>
</dbReference>
<dbReference type="GO" id="GO:0016740">
    <property type="term" value="F:transferase activity"/>
    <property type="evidence" value="ECO:0007669"/>
    <property type="project" value="UniProtKB-KW"/>
</dbReference>
<dbReference type="GO" id="GO:0071555">
    <property type="term" value="P:cell wall organization"/>
    <property type="evidence" value="ECO:0007669"/>
    <property type="project" value="UniProtKB-KW"/>
</dbReference>
<dbReference type="GO" id="GO:0070395">
    <property type="term" value="P:lipoteichoic acid biosynthetic process"/>
    <property type="evidence" value="ECO:0007669"/>
    <property type="project" value="UniProtKB-UniPathway"/>
</dbReference>
<dbReference type="CDD" id="cd16015">
    <property type="entry name" value="LTA_synthase"/>
    <property type="match status" value="1"/>
</dbReference>
<dbReference type="Gene3D" id="3.30.1120.170">
    <property type="match status" value="1"/>
</dbReference>
<dbReference type="Gene3D" id="3.40.720.10">
    <property type="entry name" value="Alkaline Phosphatase, subunit A"/>
    <property type="match status" value="1"/>
</dbReference>
<dbReference type="InterPro" id="IPR017850">
    <property type="entry name" value="Alkaline_phosphatase_core_sf"/>
</dbReference>
<dbReference type="InterPro" id="IPR012160">
    <property type="entry name" value="LtaS-like"/>
</dbReference>
<dbReference type="InterPro" id="IPR050448">
    <property type="entry name" value="OpgB/LTA_synthase_biosynth"/>
</dbReference>
<dbReference type="InterPro" id="IPR000917">
    <property type="entry name" value="Sulfatase_N"/>
</dbReference>
<dbReference type="PANTHER" id="PTHR47371">
    <property type="entry name" value="LIPOTEICHOIC ACID SYNTHASE"/>
    <property type="match status" value="1"/>
</dbReference>
<dbReference type="PANTHER" id="PTHR47371:SF3">
    <property type="entry name" value="PHOSPHOGLYCEROL TRANSFERASE I"/>
    <property type="match status" value="1"/>
</dbReference>
<dbReference type="Pfam" id="PF00884">
    <property type="entry name" value="Sulfatase"/>
    <property type="match status" value="1"/>
</dbReference>
<dbReference type="PIRSF" id="PIRSF005091">
    <property type="entry name" value="Mmb_sulf_HI1246"/>
    <property type="match status" value="1"/>
</dbReference>
<dbReference type="SUPFAM" id="SSF53649">
    <property type="entry name" value="Alkaline phosphatase-like"/>
    <property type="match status" value="1"/>
</dbReference>
<accession>Q99VQ4</accession>
<proteinExistence type="inferred from homology"/>
<reference key="1">
    <citation type="journal article" date="2001" name="Lancet">
        <title>Whole genome sequencing of meticillin-resistant Staphylococcus aureus.</title>
        <authorList>
            <person name="Kuroda M."/>
            <person name="Ohta T."/>
            <person name="Uchiyama I."/>
            <person name="Baba T."/>
            <person name="Yuzawa H."/>
            <person name="Kobayashi I."/>
            <person name="Cui L."/>
            <person name="Oguchi A."/>
            <person name="Aoki K."/>
            <person name="Nagai Y."/>
            <person name="Lian J.-Q."/>
            <person name="Ito T."/>
            <person name="Kanamori M."/>
            <person name="Matsumaru H."/>
            <person name="Maruyama A."/>
            <person name="Murakami H."/>
            <person name="Hosoyama A."/>
            <person name="Mizutani-Ui Y."/>
            <person name="Takahashi N.K."/>
            <person name="Sawano T."/>
            <person name="Inoue R."/>
            <person name="Kaito C."/>
            <person name="Sekimizu K."/>
            <person name="Hirakawa H."/>
            <person name="Kuhara S."/>
            <person name="Goto S."/>
            <person name="Yabuzaki J."/>
            <person name="Kanehisa M."/>
            <person name="Yamashita A."/>
            <person name="Oshima K."/>
            <person name="Furuya K."/>
            <person name="Yoshino C."/>
            <person name="Shiba T."/>
            <person name="Hattori M."/>
            <person name="Ogasawara N."/>
            <person name="Hayashi H."/>
            <person name="Hiramatsu K."/>
        </authorList>
    </citation>
    <scope>NUCLEOTIDE SEQUENCE [LARGE SCALE GENOMIC DNA]</scope>
    <source>
        <strain>Mu50 / ATCC 700699</strain>
    </source>
</reference>
<name>LTAS_STAAM</name>